<proteinExistence type="inferred from homology"/>
<name>SYFA_BACCN</name>
<sequence length="344" mass="39049">MEARLKELKQKALKLIEEAKELKSLNDVRVAYLGKKGPITEVLRGMGKLSPEERPRMGALVNEVREAIQTRLEEKVSNLEKAVMEAKLASETIDVTLPGRPVETGCHHPLTAVVEQIEDVFIGMGYEVAEGTEVEKDYYNFEALNLPKDHPARDMQDTFYITEETLLRTHTSSVQARTMENNKEKGPIKIICPGKVYRRDDDDATHSHQFMQIEGLVIDKNIRMSDLKGTLQVFVKKMFGEDREIRLRPSFFPFTEPSVEMDISCMMCHGKGCGTCKGTGWIEILGAGMVHPNVLEMAGYDSKEYQGFAFGMGAERIAMLKYGVDDIRHFYTNDVRFLQQFKRA</sequence>
<accession>A7GTL0</accession>
<protein>
    <recommendedName>
        <fullName evidence="1">Phenylalanine--tRNA ligase alpha subunit</fullName>
        <ecNumber evidence="1">6.1.1.20</ecNumber>
    </recommendedName>
    <alternativeName>
        <fullName evidence="1">Phenylalanyl-tRNA synthetase alpha subunit</fullName>
        <shortName evidence="1">PheRS</shortName>
    </alternativeName>
</protein>
<evidence type="ECO:0000255" key="1">
    <source>
        <dbReference type="HAMAP-Rule" id="MF_00281"/>
    </source>
</evidence>
<gene>
    <name evidence="1" type="primary">pheS</name>
    <name type="ordered locus">Bcer98_3249</name>
</gene>
<comment type="catalytic activity">
    <reaction evidence="1">
        <text>tRNA(Phe) + L-phenylalanine + ATP = L-phenylalanyl-tRNA(Phe) + AMP + diphosphate + H(+)</text>
        <dbReference type="Rhea" id="RHEA:19413"/>
        <dbReference type="Rhea" id="RHEA-COMP:9668"/>
        <dbReference type="Rhea" id="RHEA-COMP:9699"/>
        <dbReference type="ChEBI" id="CHEBI:15378"/>
        <dbReference type="ChEBI" id="CHEBI:30616"/>
        <dbReference type="ChEBI" id="CHEBI:33019"/>
        <dbReference type="ChEBI" id="CHEBI:58095"/>
        <dbReference type="ChEBI" id="CHEBI:78442"/>
        <dbReference type="ChEBI" id="CHEBI:78531"/>
        <dbReference type="ChEBI" id="CHEBI:456215"/>
        <dbReference type="EC" id="6.1.1.20"/>
    </reaction>
</comment>
<comment type="cofactor">
    <cofactor evidence="1">
        <name>Mg(2+)</name>
        <dbReference type="ChEBI" id="CHEBI:18420"/>
    </cofactor>
    <text evidence="1">Binds 2 magnesium ions per tetramer.</text>
</comment>
<comment type="subunit">
    <text evidence="1">Tetramer of two alpha and two beta subunits.</text>
</comment>
<comment type="subcellular location">
    <subcellularLocation>
        <location evidence="1">Cytoplasm</location>
    </subcellularLocation>
</comment>
<comment type="similarity">
    <text evidence="1">Belongs to the class-II aminoacyl-tRNA synthetase family. Phe-tRNA synthetase alpha subunit type 1 subfamily.</text>
</comment>
<reference key="1">
    <citation type="journal article" date="2008" name="Chem. Biol. Interact.">
        <title>Extending the Bacillus cereus group genomics to putative food-borne pathogens of different toxicity.</title>
        <authorList>
            <person name="Lapidus A."/>
            <person name="Goltsman E."/>
            <person name="Auger S."/>
            <person name="Galleron N."/>
            <person name="Segurens B."/>
            <person name="Dossat C."/>
            <person name="Land M.L."/>
            <person name="Broussolle V."/>
            <person name="Brillard J."/>
            <person name="Guinebretiere M.-H."/>
            <person name="Sanchis V."/>
            <person name="Nguen-the C."/>
            <person name="Lereclus D."/>
            <person name="Richardson P."/>
            <person name="Wincker P."/>
            <person name="Weissenbach J."/>
            <person name="Ehrlich S.D."/>
            <person name="Sorokin A."/>
        </authorList>
    </citation>
    <scope>NUCLEOTIDE SEQUENCE [LARGE SCALE GENOMIC DNA]</scope>
    <source>
        <strain>DSM 22905 / CIP 110041 / 391-98 / NVH 391-98</strain>
    </source>
</reference>
<organism>
    <name type="scientific">Bacillus cytotoxicus (strain DSM 22905 / CIP 110041 / 391-98 / NVH 391-98)</name>
    <dbReference type="NCBI Taxonomy" id="315749"/>
    <lineage>
        <taxon>Bacteria</taxon>
        <taxon>Bacillati</taxon>
        <taxon>Bacillota</taxon>
        <taxon>Bacilli</taxon>
        <taxon>Bacillales</taxon>
        <taxon>Bacillaceae</taxon>
        <taxon>Bacillus</taxon>
        <taxon>Bacillus cereus group</taxon>
    </lineage>
</organism>
<keyword id="KW-0030">Aminoacyl-tRNA synthetase</keyword>
<keyword id="KW-0067">ATP-binding</keyword>
<keyword id="KW-0963">Cytoplasm</keyword>
<keyword id="KW-0436">Ligase</keyword>
<keyword id="KW-0460">Magnesium</keyword>
<keyword id="KW-0479">Metal-binding</keyword>
<keyword id="KW-0547">Nucleotide-binding</keyword>
<keyword id="KW-0648">Protein biosynthesis</keyword>
<feature type="chain" id="PRO_1000078825" description="Phenylalanine--tRNA ligase alpha subunit">
    <location>
        <begin position="1"/>
        <end position="344"/>
    </location>
</feature>
<feature type="binding site" evidence="1">
    <location>
        <position position="256"/>
    </location>
    <ligand>
        <name>Mg(2+)</name>
        <dbReference type="ChEBI" id="CHEBI:18420"/>
        <note>shared with beta subunit</note>
    </ligand>
</feature>
<dbReference type="EC" id="6.1.1.20" evidence="1"/>
<dbReference type="EMBL" id="CP000764">
    <property type="protein sequence ID" value="ABS23468.1"/>
    <property type="molecule type" value="Genomic_DNA"/>
</dbReference>
<dbReference type="RefSeq" id="WP_012095707.1">
    <property type="nucleotide sequence ID" value="NC_009674.1"/>
</dbReference>
<dbReference type="SMR" id="A7GTL0"/>
<dbReference type="STRING" id="315749.Bcer98_3249"/>
<dbReference type="GeneID" id="33898494"/>
<dbReference type="KEGG" id="bcy:Bcer98_3249"/>
<dbReference type="eggNOG" id="COG0016">
    <property type="taxonomic scope" value="Bacteria"/>
</dbReference>
<dbReference type="HOGENOM" id="CLU_025086_0_1_9"/>
<dbReference type="OrthoDB" id="9800719at2"/>
<dbReference type="Proteomes" id="UP000002300">
    <property type="component" value="Chromosome"/>
</dbReference>
<dbReference type="GO" id="GO:0005737">
    <property type="term" value="C:cytoplasm"/>
    <property type="evidence" value="ECO:0007669"/>
    <property type="project" value="UniProtKB-SubCell"/>
</dbReference>
<dbReference type="GO" id="GO:0005524">
    <property type="term" value="F:ATP binding"/>
    <property type="evidence" value="ECO:0007669"/>
    <property type="project" value="UniProtKB-UniRule"/>
</dbReference>
<dbReference type="GO" id="GO:0140096">
    <property type="term" value="F:catalytic activity, acting on a protein"/>
    <property type="evidence" value="ECO:0007669"/>
    <property type="project" value="UniProtKB-ARBA"/>
</dbReference>
<dbReference type="GO" id="GO:0000287">
    <property type="term" value="F:magnesium ion binding"/>
    <property type="evidence" value="ECO:0007669"/>
    <property type="project" value="UniProtKB-UniRule"/>
</dbReference>
<dbReference type="GO" id="GO:0004826">
    <property type="term" value="F:phenylalanine-tRNA ligase activity"/>
    <property type="evidence" value="ECO:0007669"/>
    <property type="project" value="UniProtKB-UniRule"/>
</dbReference>
<dbReference type="GO" id="GO:0016740">
    <property type="term" value="F:transferase activity"/>
    <property type="evidence" value="ECO:0007669"/>
    <property type="project" value="UniProtKB-ARBA"/>
</dbReference>
<dbReference type="GO" id="GO:0000049">
    <property type="term" value="F:tRNA binding"/>
    <property type="evidence" value="ECO:0007669"/>
    <property type="project" value="InterPro"/>
</dbReference>
<dbReference type="GO" id="GO:0006432">
    <property type="term" value="P:phenylalanyl-tRNA aminoacylation"/>
    <property type="evidence" value="ECO:0007669"/>
    <property type="project" value="UniProtKB-UniRule"/>
</dbReference>
<dbReference type="CDD" id="cd00496">
    <property type="entry name" value="PheRS_alpha_core"/>
    <property type="match status" value="1"/>
</dbReference>
<dbReference type="FunFam" id="3.30.930.10:FF:000003">
    <property type="entry name" value="Phenylalanine--tRNA ligase alpha subunit"/>
    <property type="match status" value="1"/>
</dbReference>
<dbReference type="Gene3D" id="3.30.930.10">
    <property type="entry name" value="Bira Bifunctional Protein, Domain 2"/>
    <property type="match status" value="1"/>
</dbReference>
<dbReference type="HAMAP" id="MF_00281">
    <property type="entry name" value="Phe_tRNA_synth_alpha1"/>
    <property type="match status" value="1"/>
</dbReference>
<dbReference type="InterPro" id="IPR006195">
    <property type="entry name" value="aa-tRNA-synth_II"/>
</dbReference>
<dbReference type="InterPro" id="IPR045864">
    <property type="entry name" value="aa-tRNA-synth_II/BPL/LPL"/>
</dbReference>
<dbReference type="InterPro" id="IPR004529">
    <property type="entry name" value="Phe-tRNA-synth_IIc_asu"/>
</dbReference>
<dbReference type="InterPro" id="IPR004188">
    <property type="entry name" value="Phe-tRNA_ligase_II_N"/>
</dbReference>
<dbReference type="InterPro" id="IPR022911">
    <property type="entry name" value="Phe_tRNA_ligase_alpha1_bac"/>
</dbReference>
<dbReference type="InterPro" id="IPR002319">
    <property type="entry name" value="Phenylalanyl-tRNA_Synthase"/>
</dbReference>
<dbReference type="InterPro" id="IPR010978">
    <property type="entry name" value="tRNA-bd_arm"/>
</dbReference>
<dbReference type="NCBIfam" id="TIGR00468">
    <property type="entry name" value="pheS"/>
    <property type="match status" value="1"/>
</dbReference>
<dbReference type="PANTHER" id="PTHR11538:SF41">
    <property type="entry name" value="PHENYLALANINE--TRNA LIGASE, MITOCHONDRIAL"/>
    <property type="match status" value="1"/>
</dbReference>
<dbReference type="PANTHER" id="PTHR11538">
    <property type="entry name" value="PHENYLALANYL-TRNA SYNTHETASE"/>
    <property type="match status" value="1"/>
</dbReference>
<dbReference type="Pfam" id="PF02912">
    <property type="entry name" value="Phe_tRNA-synt_N"/>
    <property type="match status" value="1"/>
</dbReference>
<dbReference type="Pfam" id="PF01409">
    <property type="entry name" value="tRNA-synt_2d"/>
    <property type="match status" value="1"/>
</dbReference>
<dbReference type="SUPFAM" id="SSF55681">
    <property type="entry name" value="Class II aaRS and biotin synthetases"/>
    <property type="match status" value="1"/>
</dbReference>
<dbReference type="SUPFAM" id="SSF46589">
    <property type="entry name" value="tRNA-binding arm"/>
    <property type="match status" value="1"/>
</dbReference>
<dbReference type="PROSITE" id="PS50862">
    <property type="entry name" value="AA_TRNA_LIGASE_II"/>
    <property type="match status" value="1"/>
</dbReference>